<keyword id="KW-0040">ANK repeat</keyword>
<keyword id="KW-0256">Endoplasmic reticulum</keyword>
<keyword id="KW-1185">Reference proteome</keyword>
<keyword id="KW-0677">Repeat</keyword>
<keyword id="KW-0833">Ubl conjugation pathway</keyword>
<accession>Q5RFS1</accession>
<comment type="function">
    <text evidence="1">Substrate-recognition component of a cullin-5-RING E3 ubiquitin-protein ligase complex (ECS complex, also named CRL5 complex), which mediates the ubiquitination and subsequent proteasomal degradation of target proteins, such as BIK, DIRAS2 and RPN1. The ECS(ASB11) complex acts as a regulator of the endoplasmic reticulum unfolded protein response by mediating ubiquitination and degradation of BIK.</text>
</comment>
<comment type="pathway">
    <text evidence="1">Protein modification; protein ubiquitination.</text>
</comment>
<comment type="subunit">
    <text evidence="1">Substrate-recognition component of the ECS(ASB11) complex, composed of ASB11, CUL5, ELOB, ELOC and RNF7/RBX2.</text>
</comment>
<comment type="subcellular location">
    <subcellularLocation>
        <location evidence="1">Endoplasmic reticulum</location>
    </subcellularLocation>
</comment>
<comment type="similarity">
    <text evidence="3">Belongs to the ankyrin SOCS box (ASB) family.</text>
</comment>
<reference key="1">
    <citation type="submission" date="2004-11" db="EMBL/GenBank/DDBJ databases">
        <authorList>
            <consortium name="The German cDNA consortium"/>
        </authorList>
    </citation>
    <scope>NUCLEOTIDE SEQUENCE [LARGE SCALE MRNA]</scope>
    <source>
        <tissue>Heart</tissue>
    </source>
</reference>
<dbReference type="EMBL" id="CR857081">
    <property type="protein sequence ID" value="CAH89386.1"/>
    <property type="molecule type" value="mRNA"/>
</dbReference>
<dbReference type="RefSeq" id="NP_001124584.1">
    <property type="nucleotide sequence ID" value="NM_001131112.1"/>
</dbReference>
<dbReference type="SMR" id="Q5RFS1"/>
<dbReference type="FunCoup" id="Q5RFS1">
    <property type="interactions" value="7"/>
</dbReference>
<dbReference type="STRING" id="9601.ENSPPYP00000022531"/>
<dbReference type="Ensembl" id="ENSPPYT00000023489.2">
    <property type="protein sequence ID" value="ENSPPYP00000022531.1"/>
    <property type="gene ID" value="ENSPPYG00000020141.2"/>
</dbReference>
<dbReference type="GeneID" id="100171419"/>
<dbReference type="KEGG" id="pon:100171419"/>
<dbReference type="CTD" id="140456"/>
<dbReference type="eggNOG" id="KOG0504">
    <property type="taxonomic scope" value="Eukaryota"/>
</dbReference>
<dbReference type="GeneTree" id="ENSGT00940000160592"/>
<dbReference type="HOGENOM" id="CLU_000134_4_1_1"/>
<dbReference type="InParanoid" id="Q5RFS1"/>
<dbReference type="OrthoDB" id="3246549at2759"/>
<dbReference type="TreeFam" id="TF331945"/>
<dbReference type="UniPathway" id="UPA00143"/>
<dbReference type="Proteomes" id="UP000001595">
    <property type="component" value="Chromosome X"/>
</dbReference>
<dbReference type="GO" id="GO:0031466">
    <property type="term" value="C:Cul5-RING ubiquitin ligase complex"/>
    <property type="evidence" value="ECO:0000250"/>
    <property type="project" value="UniProtKB"/>
</dbReference>
<dbReference type="GO" id="GO:0005783">
    <property type="term" value="C:endoplasmic reticulum"/>
    <property type="evidence" value="ECO:0000250"/>
    <property type="project" value="UniProtKB"/>
</dbReference>
<dbReference type="GO" id="GO:1990756">
    <property type="term" value="F:ubiquitin-like ligase-substrate adaptor activity"/>
    <property type="evidence" value="ECO:0000250"/>
    <property type="project" value="UniProtKB"/>
</dbReference>
<dbReference type="GO" id="GO:0030968">
    <property type="term" value="P:endoplasmic reticulum unfolded protein response"/>
    <property type="evidence" value="ECO:0000250"/>
    <property type="project" value="UniProtKB"/>
</dbReference>
<dbReference type="GO" id="GO:0045732">
    <property type="term" value="P:positive regulation of protein catabolic process"/>
    <property type="evidence" value="ECO:0007669"/>
    <property type="project" value="TreeGrafter"/>
</dbReference>
<dbReference type="GO" id="GO:0043161">
    <property type="term" value="P:proteasome-mediated ubiquitin-dependent protein catabolic process"/>
    <property type="evidence" value="ECO:0000250"/>
    <property type="project" value="UniProtKB"/>
</dbReference>
<dbReference type="GO" id="GO:0070979">
    <property type="term" value="P:protein K11-linked ubiquitination"/>
    <property type="evidence" value="ECO:0000250"/>
    <property type="project" value="UniProtKB"/>
</dbReference>
<dbReference type="GO" id="GO:0016567">
    <property type="term" value="P:protein ubiquitination"/>
    <property type="evidence" value="ECO:0000250"/>
    <property type="project" value="UniProtKB"/>
</dbReference>
<dbReference type="CDD" id="cd03728">
    <property type="entry name" value="SOCS_ASB_9_11"/>
    <property type="match status" value="1"/>
</dbReference>
<dbReference type="FunFam" id="1.10.750.20:FF:000001">
    <property type="entry name" value="Ankyrin repeat and SOCS box containing 1"/>
    <property type="match status" value="1"/>
</dbReference>
<dbReference type="FunFam" id="1.25.40.20:FF:000016">
    <property type="entry name" value="Ankyrin repeat and SOCS box containing 5"/>
    <property type="match status" value="1"/>
</dbReference>
<dbReference type="Gene3D" id="1.25.40.20">
    <property type="entry name" value="Ankyrin repeat-containing domain"/>
    <property type="match status" value="1"/>
</dbReference>
<dbReference type="Gene3D" id="1.10.750.20">
    <property type="entry name" value="SOCS box"/>
    <property type="match status" value="1"/>
</dbReference>
<dbReference type="InterPro" id="IPR051573">
    <property type="entry name" value="Ankyrin-SOCS_box_domain"/>
</dbReference>
<dbReference type="InterPro" id="IPR002110">
    <property type="entry name" value="Ankyrin_rpt"/>
</dbReference>
<dbReference type="InterPro" id="IPR036770">
    <property type="entry name" value="Ankyrin_rpt-contain_sf"/>
</dbReference>
<dbReference type="InterPro" id="IPR037333">
    <property type="entry name" value="ASB9/11_SOCS"/>
</dbReference>
<dbReference type="InterPro" id="IPR001496">
    <property type="entry name" value="SOCS_box"/>
</dbReference>
<dbReference type="InterPro" id="IPR036036">
    <property type="entry name" value="SOCS_box-like_dom_sf"/>
</dbReference>
<dbReference type="PANTHER" id="PTHR24136:SF14">
    <property type="entry name" value="ANKYRIN REPEAT AND SOCS BOX PROTEIN 11"/>
    <property type="match status" value="1"/>
</dbReference>
<dbReference type="PANTHER" id="PTHR24136">
    <property type="entry name" value="SOWAH (DROSOPHILA) HOMOLOG"/>
    <property type="match status" value="1"/>
</dbReference>
<dbReference type="Pfam" id="PF12796">
    <property type="entry name" value="Ank_2"/>
    <property type="match status" value="3"/>
</dbReference>
<dbReference type="Pfam" id="PF07525">
    <property type="entry name" value="SOCS_box"/>
    <property type="match status" value="1"/>
</dbReference>
<dbReference type="SMART" id="SM00248">
    <property type="entry name" value="ANK"/>
    <property type="match status" value="6"/>
</dbReference>
<dbReference type="SMART" id="SM00969">
    <property type="entry name" value="SOCS_box"/>
    <property type="match status" value="1"/>
</dbReference>
<dbReference type="SUPFAM" id="SSF48403">
    <property type="entry name" value="Ankyrin repeat"/>
    <property type="match status" value="1"/>
</dbReference>
<dbReference type="SUPFAM" id="SSF158235">
    <property type="entry name" value="SOCS box-like"/>
    <property type="match status" value="1"/>
</dbReference>
<dbReference type="PROSITE" id="PS50297">
    <property type="entry name" value="ANK_REP_REGION"/>
    <property type="match status" value="1"/>
</dbReference>
<dbReference type="PROSITE" id="PS50088">
    <property type="entry name" value="ANK_REPEAT"/>
    <property type="match status" value="5"/>
</dbReference>
<dbReference type="PROSITE" id="PS50225">
    <property type="entry name" value="SOCS"/>
    <property type="match status" value="1"/>
</dbReference>
<name>ASB11_PONAB</name>
<protein>
    <recommendedName>
        <fullName>Ankyrin repeat and SOCS box protein 11</fullName>
        <shortName>ASB-11</shortName>
    </recommendedName>
</protein>
<feature type="chain" id="PRO_0000066946" description="Ankyrin repeat and SOCS box protein 11">
    <location>
        <begin position="1"/>
        <end position="323"/>
    </location>
</feature>
<feature type="repeat" description="ANK 1">
    <location>
        <begin position="64"/>
        <end position="93"/>
    </location>
</feature>
<feature type="repeat" description="ANK 2">
    <location>
        <begin position="97"/>
        <end position="126"/>
    </location>
</feature>
<feature type="repeat" description="ANK 3">
    <location>
        <begin position="130"/>
        <end position="159"/>
    </location>
</feature>
<feature type="repeat" description="ANK 4">
    <location>
        <begin position="162"/>
        <end position="191"/>
    </location>
</feature>
<feature type="repeat" description="ANK 5">
    <location>
        <begin position="195"/>
        <end position="224"/>
    </location>
</feature>
<feature type="repeat" description="ANK 6">
    <location>
        <begin position="227"/>
        <end position="256"/>
    </location>
</feature>
<feature type="domain" description="SOCS box" evidence="2">
    <location>
        <begin position="274"/>
        <end position="323"/>
    </location>
</feature>
<organism>
    <name type="scientific">Pongo abelii</name>
    <name type="common">Sumatran orangutan</name>
    <name type="synonym">Pongo pygmaeus abelii</name>
    <dbReference type="NCBI Taxonomy" id="9601"/>
    <lineage>
        <taxon>Eukaryota</taxon>
        <taxon>Metazoa</taxon>
        <taxon>Chordata</taxon>
        <taxon>Craniata</taxon>
        <taxon>Vertebrata</taxon>
        <taxon>Euteleostomi</taxon>
        <taxon>Mammalia</taxon>
        <taxon>Eutheria</taxon>
        <taxon>Euarchontoglires</taxon>
        <taxon>Primates</taxon>
        <taxon>Haplorrhini</taxon>
        <taxon>Catarrhini</taxon>
        <taxon>Hominidae</taxon>
        <taxon>Pongo</taxon>
    </lineage>
</organism>
<sequence length="323" mass="35348">MEDGPVFYGFKNIFITMFATFFFFKLLIKVFLALLTHFYIVKGNRKEAARIAEEIYGGISDCWADRSPLHEAAAQGRLLALKTLIAQGVNVNLVTINRVSSLHEACLGGHVACAKALLENGAHVNGVTVHGATPLFNACCSGSAACVNVLLEFGAKAQFEVHLASPIHEAVKRGHRECMEILLANNVNIDHEVPQLGTPLYVACTYQRVDCVKKLLELGASVDHGQWLDTPLHAAARQSNVEVIHLLTDYGANLKRRNAQGKSALDLAAPKSSVEQALLLCEGPPALSQLCRLCVRKCLGRACHQAIHKLHLPEPLERFLLYQ</sequence>
<gene>
    <name type="primary">ASB11</name>
</gene>
<evidence type="ECO:0000250" key="1">
    <source>
        <dbReference type="UniProtKB" id="Q8WXH4"/>
    </source>
</evidence>
<evidence type="ECO:0000255" key="2">
    <source>
        <dbReference type="PROSITE-ProRule" id="PRU00194"/>
    </source>
</evidence>
<evidence type="ECO:0000305" key="3"/>
<proteinExistence type="evidence at transcript level"/>